<evidence type="ECO:0000255" key="1">
    <source>
        <dbReference type="HAMAP-Rule" id="MF_01331"/>
    </source>
</evidence>
<evidence type="ECO:0000305" key="2"/>
<dbReference type="EMBL" id="CP001111">
    <property type="protein sequence ID" value="ACF50466.1"/>
    <property type="molecule type" value="Genomic_DNA"/>
</dbReference>
<dbReference type="RefSeq" id="WP_004145348.1">
    <property type="nucleotide sequence ID" value="NC_011071.1"/>
</dbReference>
<dbReference type="SMR" id="B4SKW8"/>
<dbReference type="STRING" id="391008.Smal_0761"/>
<dbReference type="GeneID" id="97259939"/>
<dbReference type="KEGG" id="smt:Smal_0761"/>
<dbReference type="eggNOG" id="COG0091">
    <property type="taxonomic scope" value="Bacteria"/>
</dbReference>
<dbReference type="HOGENOM" id="CLU_083987_3_3_6"/>
<dbReference type="OrthoDB" id="9805969at2"/>
<dbReference type="Proteomes" id="UP000001867">
    <property type="component" value="Chromosome"/>
</dbReference>
<dbReference type="GO" id="GO:0022625">
    <property type="term" value="C:cytosolic large ribosomal subunit"/>
    <property type="evidence" value="ECO:0007669"/>
    <property type="project" value="TreeGrafter"/>
</dbReference>
<dbReference type="GO" id="GO:0019843">
    <property type="term" value="F:rRNA binding"/>
    <property type="evidence" value="ECO:0007669"/>
    <property type="project" value="UniProtKB-UniRule"/>
</dbReference>
<dbReference type="GO" id="GO:0003735">
    <property type="term" value="F:structural constituent of ribosome"/>
    <property type="evidence" value="ECO:0007669"/>
    <property type="project" value="InterPro"/>
</dbReference>
<dbReference type="GO" id="GO:0006412">
    <property type="term" value="P:translation"/>
    <property type="evidence" value="ECO:0007669"/>
    <property type="project" value="UniProtKB-UniRule"/>
</dbReference>
<dbReference type="CDD" id="cd00336">
    <property type="entry name" value="Ribosomal_L22"/>
    <property type="match status" value="1"/>
</dbReference>
<dbReference type="FunFam" id="3.90.470.10:FF:000001">
    <property type="entry name" value="50S ribosomal protein L22"/>
    <property type="match status" value="1"/>
</dbReference>
<dbReference type="Gene3D" id="3.90.470.10">
    <property type="entry name" value="Ribosomal protein L22/L17"/>
    <property type="match status" value="1"/>
</dbReference>
<dbReference type="HAMAP" id="MF_01331_B">
    <property type="entry name" value="Ribosomal_uL22_B"/>
    <property type="match status" value="1"/>
</dbReference>
<dbReference type="InterPro" id="IPR001063">
    <property type="entry name" value="Ribosomal_uL22"/>
</dbReference>
<dbReference type="InterPro" id="IPR005727">
    <property type="entry name" value="Ribosomal_uL22_bac/chlpt-type"/>
</dbReference>
<dbReference type="InterPro" id="IPR047867">
    <property type="entry name" value="Ribosomal_uL22_bac/org-type"/>
</dbReference>
<dbReference type="InterPro" id="IPR018260">
    <property type="entry name" value="Ribosomal_uL22_CS"/>
</dbReference>
<dbReference type="InterPro" id="IPR036394">
    <property type="entry name" value="Ribosomal_uL22_sf"/>
</dbReference>
<dbReference type="NCBIfam" id="TIGR01044">
    <property type="entry name" value="rplV_bact"/>
    <property type="match status" value="1"/>
</dbReference>
<dbReference type="PANTHER" id="PTHR13501">
    <property type="entry name" value="CHLOROPLAST 50S RIBOSOMAL PROTEIN L22-RELATED"/>
    <property type="match status" value="1"/>
</dbReference>
<dbReference type="PANTHER" id="PTHR13501:SF8">
    <property type="entry name" value="LARGE RIBOSOMAL SUBUNIT PROTEIN UL22M"/>
    <property type="match status" value="1"/>
</dbReference>
<dbReference type="Pfam" id="PF00237">
    <property type="entry name" value="Ribosomal_L22"/>
    <property type="match status" value="1"/>
</dbReference>
<dbReference type="SUPFAM" id="SSF54843">
    <property type="entry name" value="Ribosomal protein L22"/>
    <property type="match status" value="1"/>
</dbReference>
<dbReference type="PROSITE" id="PS00464">
    <property type="entry name" value="RIBOSOMAL_L22"/>
    <property type="match status" value="1"/>
</dbReference>
<gene>
    <name evidence="1" type="primary">rplV</name>
    <name type="ordered locus">Smal_0761</name>
</gene>
<name>RL22_STRM5</name>
<comment type="function">
    <text evidence="1">This protein binds specifically to 23S rRNA; its binding is stimulated by other ribosomal proteins, e.g. L4, L17, and L20. It is important during the early stages of 50S assembly. It makes multiple contacts with different domains of the 23S rRNA in the assembled 50S subunit and ribosome (By similarity).</text>
</comment>
<comment type="function">
    <text evidence="1">The globular domain of the protein is located near the polypeptide exit tunnel on the outside of the subunit, while an extended beta-hairpin is found that lines the wall of the exit tunnel in the center of the 70S ribosome.</text>
</comment>
<comment type="subunit">
    <text evidence="1">Part of the 50S ribosomal subunit.</text>
</comment>
<comment type="similarity">
    <text evidence="1">Belongs to the universal ribosomal protein uL22 family.</text>
</comment>
<reference key="1">
    <citation type="submission" date="2008-06" db="EMBL/GenBank/DDBJ databases">
        <title>Complete sequence of Stenotrophomonas maltophilia R551-3.</title>
        <authorList>
            <consortium name="US DOE Joint Genome Institute"/>
            <person name="Lucas S."/>
            <person name="Copeland A."/>
            <person name="Lapidus A."/>
            <person name="Glavina del Rio T."/>
            <person name="Dalin E."/>
            <person name="Tice H."/>
            <person name="Pitluck S."/>
            <person name="Chain P."/>
            <person name="Malfatti S."/>
            <person name="Shin M."/>
            <person name="Vergez L."/>
            <person name="Lang D."/>
            <person name="Schmutz J."/>
            <person name="Larimer F."/>
            <person name="Land M."/>
            <person name="Hauser L."/>
            <person name="Kyrpides N."/>
            <person name="Mikhailova N."/>
            <person name="Taghavi S."/>
            <person name="Monchy S."/>
            <person name="Newman L."/>
            <person name="Vangronsveld J."/>
            <person name="van der Lelie D."/>
            <person name="Richardson P."/>
        </authorList>
    </citation>
    <scope>NUCLEOTIDE SEQUENCE [LARGE SCALE GENOMIC DNA]</scope>
    <source>
        <strain>R551-3</strain>
    </source>
</reference>
<protein>
    <recommendedName>
        <fullName evidence="1">Large ribosomal subunit protein uL22</fullName>
    </recommendedName>
    <alternativeName>
        <fullName evidence="2">50S ribosomal protein L22</fullName>
    </alternativeName>
</protein>
<sequence>MEAKAILRTARISPQKARLVADQVRGLPAERAVNLLKFSDKKAAHLIKKVVESAIANAENNQGADVDELKVQTIMVDEGPTLKRFMARAKGRGTRILKRTSHITVVVGAAK</sequence>
<feature type="chain" id="PRO_1000142313" description="Large ribosomal subunit protein uL22">
    <location>
        <begin position="1"/>
        <end position="111"/>
    </location>
</feature>
<proteinExistence type="inferred from homology"/>
<organism>
    <name type="scientific">Stenotrophomonas maltophilia (strain R551-3)</name>
    <dbReference type="NCBI Taxonomy" id="391008"/>
    <lineage>
        <taxon>Bacteria</taxon>
        <taxon>Pseudomonadati</taxon>
        <taxon>Pseudomonadota</taxon>
        <taxon>Gammaproteobacteria</taxon>
        <taxon>Lysobacterales</taxon>
        <taxon>Lysobacteraceae</taxon>
        <taxon>Stenotrophomonas</taxon>
        <taxon>Stenotrophomonas maltophilia group</taxon>
    </lineage>
</organism>
<keyword id="KW-0687">Ribonucleoprotein</keyword>
<keyword id="KW-0689">Ribosomal protein</keyword>
<keyword id="KW-0694">RNA-binding</keyword>
<keyword id="KW-0699">rRNA-binding</keyword>
<accession>B4SKW8</accession>